<evidence type="ECO:0000250" key="1"/>
<evidence type="ECO:0000256" key="2">
    <source>
        <dbReference type="SAM" id="MobiDB-lite"/>
    </source>
</evidence>
<evidence type="ECO:0000305" key="3"/>
<organism>
    <name type="scientific">Boselaphus tragocamelus</name>
    <name type="common">Nilgai</name>
    <dbReference type="NCBI Taxonomy" id="9917"/>
    <lineage>
        <taxon>Eukaryota</taxon>
        <taxon>Metazoa</taxon>
        <taxon>Chordata</taxon>
        <taxon>Craniata</taxon>
        <taxon>Vertebrata</taxon>
        <taxon>Euteleostomi</taxon>
        <taxon>Mammalia</taxon>
        <taxon>Eutheria</taxon>
        <taxon>Laurasiatheria</taxon>
        <taxon>Artiodactyla</taxon>
        <taxon>Ruminantia</taxon>
        <taxon>Pecora</taxon>
        <taxon>Bovidae</taxon>
        <taxon>Bovinae</taxon>
        <taxon>Boselaphus</taxon>
    </lineage>
</organism>
<feature type="chain" id="PRO_0000057182" description="Ribonuclease pancreatic">
    <location>
        <begin position="1"/>
        <end position="124"/>
    </location>
</feature>
<feature type="region of interest" description="Disordered" evidence="2">
    <location>
        <begin position="1"/>
        <end position="24"/>
    </location>
</feature>
<feature type="compositionally biased region" description="Basic and acidic residues" evidence="2">
    <location>
        <begin position="1"/>
        <end position="13"/>
    </location>
</feature>
<feature type="active site" description="Proton acceptor" evidence="1">
    <location>
        <position position="12"/>
    </location>
</feature>
<feature type="active site" description="Proton donor" evidence="1">
    <location>
        <position position="119"/>
    </location>
</feature>
<feature type="binding site" evidence="1">
    <location>
        <position position="7"/>
    </location>
    <ligand>
        <name>substrate</name>
    </ligand>
</feature>
<feature type="binding site" evidence="1">
    <location>
        <position position="10"/>
    </location>
    <ligand>
        <name>substrate</name>
    </ligand>
</feature>
<feature type="binding site" evidence="1">
    <location>
        <begin position="41"/>
        <end position="45"/>
    </location>
    <ligand>
        <name>substrate</name>
    </ligand>
</feature>
<feature type="binding site" evidence="1">
    <location>
        <position position="66"/>
    </location>
    <ligand>
        <name>substrate</name>
    </ligand>
</feature>
<feature type="binding site" evidence="1">
    <location>
        <position position="85"/>
    </location>
    <ligand>
        <name>substrate</name>
    </ligand>
</feature>
<feature type="disulfide bond" evidence="1">
    <location>
        <begin position="26"/>
        <end position="84"/>
    </location>
</feature>
<feature type="disulfide bond" evidence="1">
    <location>
        <begin position="40"/>
        <end position="95"/>
    </location>
</feature>
<feature type="disulfide bond" evidence="1">
    <location>
        <begin position="58"/>
        <end position="110"/>
    </location>
</feature>
<feature type="disulfide bond" evidence="1">
    <location>
        <begin position="65"/>
        <end position="72"/>
    </location>
</feature>
<protein>
    <recommendedName>
        <fullName>Ribonuclease pancreatic</fullName>
        <ecNumber>4.6.1.18</ecNumber>
    </recommendedName>
    <alternativeName>
        <fullName>RNase 1</fullName>
    </alternativeName>
    <alternativeName>
        <fullName>RNase A</fullName>
    </alternativeName>
</protein>
<gene>
    <name type="primary">RNASE1</name>
    <name type="synonym">RNS1</name>
</gene>
<keyword id="KW-0903">Direct protein sequencing</keyword>
<keyword id="KW-1015">Disulfide bond</keyword>
<keyword id="KW-0255">Endonuclease</keyword>
<keyword id="KW-0378">Hydrolase</keyword>
<keyword id="KW-0456">Lyase</keyword>
<keyword id="KW-0540">Nuclease</keyword>
<keyword id="KW-0964">Secreted</keyword>
<proteinExistence type="evidence at protein level"/>
<dbReference type="EC" id="4.6.1.18"/>
<dbReference type="PIR" id="S08547">
    <property type="entry name" value="S08547"/>
</dbReference>
<dbReference type="BMRB" id="P07849"/>
<dbReference type="GO" id="GO:0005576">
    <property type="term" value="C:extracellular region"/>
    <property type="evidence" value="ECO:0007669"/>
    <property type="project" value="UniProtKB-SubCell"/>
</dbReference>
<dbReference type="GO" id="GO:0016829">
    <property type="term" value="F:lyase activity"/>
    <property type="evidence" value="ECO:0007669"/>
    <property type="project" value="UniProtKB-KW"/>
</dbReference>
<dbReference type="GO" id="GO:0003676">
    <property type="term" value="F:nucleic acid binding"/>
    <property type="evidence" value="ECO:0007669"/>
    <property type="project" value="InterPro"/>
</dbReference>
<dbReference type="GO" id="GO:0004522">
    <property type="term" value="F:ribonuclease A activity"/>
    <property type="evidence" value="ECO:0007669"/>
    <property type="project" value="UniProtKB-EC"/>
</dbReference>
<dbReference type="GO" id="GO:0050830">
    <property type="term" value="P:defense response to Gram-positive bacterium"/>
    <property type="evidence" value="ECO:0007669"/>
    <property type="project" value="TreeGrafter"/>
</dbReference>
<dbReference type="CDD" id="cd06265">
    <property type="entry name" value="RNase_A_canonical"/>
    <property type="match status" value="1"/>
</dbReference>
<dbReference type="FunFam" id="3.10.130.10:FF:000001">
    <property type="entry name" value="Ribonuclease pancreatic"/>
    <property type="match status" value="1"/>
</dbReference>
<dbReference type="Gene3D" id="3.10.130.10">
    <property type="entry name" value="Ribonuclease A-like domain"/>
    <property type="match status" value="1"/>
</dbReference>
<dbReference type="InterPro" id="IPR001427">
    <property type="entry name" value="RNaseA"/>
</dbReference>
<dbReference type="InterPro" id="IPR036816">
    <property type="entry name" value="RNaseA-like_dom_sf"/>
</dbReference>
<dbReference type="InterPro" id="IPR023411">
    <property type="entry name" value="RNaseA_AS"/>
</dbReference>
<dbReference type="InterPro" id="IPR023412">
    <property type="entry name" value="RNaseA_domain"/>
</dbReference>
<dbReference type="PANTHER" id="PTHR11437">
    <property type="entry name" value="RIBONUCLEASE"/>
    <property type="match status" value="1"/>
</dbReference>
<dbReference type="PANTHER" id="PTHR11437:SF24">
    <property type="entry name" value="RIBONUCLEASE PANCREATIC"/>
    <property type="match status" value="1"/>
</dbReference>
<dbReference type="Pfam" id="PF00074">
    <property type="entry name" value="RnaseA"/>
    <property type="match status" value="1"/>
</dbReference>
<dbReference type="PRINTS" id="PR00794">
    <property type="entry name" value="RIBONUCLEASE"/>
</dbReference>
<dbReference type="SMART" id="SM00092">
    <property type="entry name" value="RNAse_Pc"/>
    <property type="match status" value="1"/>
</dbReference>
<dbReference type="SUPFAM" id="SSF54076">
    <property type="entry name" value="RNase A-like"/>
    <property type="match status" value="1"/>
</dbReference>
<dbReference type="PROSITE" id="PS00127">
    <property type="entry name" value="RNASE_PANCREATIC"/>
    <property type="match status" value="1"/>
</dbReference>
<reference key="1">
    <citation type="journal article" date="1980" name="Biochim. Biophys. Acta">
        <title>Primary structures of pancreatic ribonucleases from Bovidae. Impala, Thomson's gazelle, nilgai and water buffalo.</title>
        <authorList>
            <person name="Beintema J.J."/>
        </authorList>
    </citation>
    <scope>PROTEIN SEQUENCE</scope>
    <source>
        <tissue>Pancreas</tissue>
    </source>
</reference>
<comment type="function">
    <text evidence="1">Endonuclease that catalyzes the cleavage of RNA on the 3' side of pyrimidine nucleotides. Acts on single-stranded and double-stranded RNA (By similarity).</text>
</comment>
<comment type="catalytic activity">
    <reaction>
        <text>an [RNA] containing cytidine + H2O = an [RNA]-3'-cytidine-3'-phosphate + a 5'-hydroxy-ribonucleotide-3'-[RNA].</text>
        <dbReference type="EC" id="4.6.1.18"/>
    </reaction>
</comment>
<comment type="catalytic activity">
    <reaction>
        <text>an [RNA] containing uridine + H2O = an [RNA]-3'-uridine-3'-phosphate + a 5'-hydroxy-ribonucleotide-3'-[RNA].</text>
        <dbReference type="EC" id="4.6.1.18"/>
    </reaction>
</comment>
<comment type="subunit">
    <text evidence="1">Monomer. Interacts with and forms tight 1:1 complexes with RNH1. Dimerization of two such complexes may occur. Interaction with RNH1 inhibits this protein (By similarity).</text>
</comment>
<comment type="subcellular location">
    <subcellularLocation>
        <location>Secreted</location>
    </subcellularLocation>
</comment>
<comment type="tissue specificity">
    <text>Pancreas.</text>
</comment>
<comment type="similarity">
    <text evidence="3">Belongs to the pancreatic ribonuclease family.</text>
</comment>
<name>RNAS1_BOSTR</name>
<accession>P07849</accession>
<sequence length="124" mass="13687">KETAAAKFERQHMDSSTSSASSSNYCNQMMKSRSMTQNRCKPVBTFVHZSLABVQAVCSZKBVACKBGZTBCYZSYSTMSITBCRZTGSSKYPBCAYTTTZAKKHIIVACZGBPYVPVHFBASV</sequence>